<evidence type="ECO:0000250" key="1"/>
<evidence type="ECO:0000255" key="2"/>
<evidence type="ECO:0000255" key="3">
    <source>
        <dbReference type="PROSITE-ProRule" id="PRU00172"/>
    </source>
</evidence>
<evidence type="ECO:0000256" key="4">
    <source>
        <dbReference type="SAM" id="MobiDB-lite"/>
    </source>
</evidence>
<gene>
    <name type="primary">gacP</name>
    <name type="ORF">DDB_G0279009</name>
</gene>
<comment type="function">
    <text evidence="1">Rho GTPase-activating protein involved in the signal transduction pathway.</text>
</comment>
<comment type="subcellular location">
    <subcellularLocation>
        <location evidence="1">Cytoplasm</location>
    </subcellularLocation>
</comment>
<organism>
    <name type="scientific">Dictyostelium discoideum</name>
    <name type="common">Social amoeba</name>
    <dbReference type="NCBI Taxonomy" id="44689"/>
    <lineage>
        <taxon>Eukaryota</taxon>
        <taxon>Amoebozoa</taxon>
        <taxon>Evosea</taxon>
        <taxon>Eumycetozoa</taxon>
        <taxon>Dictyostelia</taxon>
        <taxon>Dictyosteliales</taxon>
        <taxon>Dictyosteliaceae</taxon>
        <taxon>Dictyostelium</taxon>
    </lineage>
</organism>
<dbReference type="EMBL" id="AAFI02000026">
    <property type="protein sequence ID" value="EAL67926.1"/>
    <property type="molecule type" value="Genomic_DNA"/>
</dbReference>
<dbReference type="RefSeq" id="XP_641902.1">
    <property type="nucleotide sequence ID" value="XM_636810.1"/>
</dbReference>
<dbReference type="SMR" id="Q54XE8"/>
<dbReference type="FunCoup" id="Q54XE8">
    <property type="interactions" value="133"/>
</dbReference>
<dbReference type="STRING" id="44689.Q54XE8"/>
<dbReference type="PaxDb" id="44689-DDB0233789"/>
<dbReference type="EnsemblProtists" id="EAL67926">
    <property type="protein sequence ID" value="EAL67926"/>
    <property type="gene ID" value="DDB_G0279009"/>
</dbReference>
<dbReference type="GeneID" id="8621827"/>
<dbReference type="KEGG" id="ddi:DDB_G0279009"/>
<dbReference type="dictyBase" id="DDB_G0279009">
    <property type="gene designation" value="gacP"/>
</dbReference>
<dbReference type="VEuPathDB" id="AmoebaDB:DDB_G0279009"/>
<dbReference type="eggNOG" id="KOG4270">
    <property type="taxonomic scope" value="Eukaryota"/>
</dbReference>
<dbReference type="HOGENOM" id="CLU_473651_0_0_1"/>
<dbReference type="InParanoid" id="Q54XE8"/>
<dbReference type="OMA" id="WLAQMIP"/>
<dbReference type="PhylomeDB" id="Q54XE8"/>
<dbReference type="Reactome" id="R-DDI-9013148">
    <property type="pathway name" value="CDC42 GTPase cycle"/>
</dbReference>
<dbReference type="Reactome" id="R-DDI-9013149">
    <property type="pathway name" value="RAC1 GTPase cycle"/>
</dbReference>
<dbReference type="Reactome" id="R-DDI-9013423">
    <property type="pathway name" value="RAC3 GTPase cycle"/>
</dbReference>
<dbReference type="Reactome" id="R-DDI-9013424">
    <property type="pathway name" value="RHOV GTPase cycle"/>
</dbReference>
<dbReference type="PRO" id="PR:Q54XE8"/>
<dbReference type="Proteomes" id="UP000002195">
    <property type="component" value="Chromosome 3"/>
</dbReference>
<dbReference type="GO" id="GO:0005737">
    <property type="term" value="C:cytoplasm"/>
    <property type="evidence" value="ECO:0000318"/>
    <property type="project" value="GO_Central"/>
</dbReference>
<dbReference type="GO" id="GO:0005886">
    <property type="term" value="C:plasma membrane"/>
    <property type="evidence" value="ECO:0000318"/>
    <property type="project" value="GO_Central"/>
</dbReference>
<dbReference type="GO" id="GO:0005096">
    <property type="term" value="F:GTPase activator activity"/>
    <property type="evidence" value="ECO:0000318"/>
    <property type="project" value="GO_Central"/>
</dbReference>
<dbReference type="GO" id="GO:0007264">
    <property type="term" value="P:small GTPase-mediated signal transduction"/>
    <property type="evidence" value="ECO:0000318"/>
    <property type="project" value="GO_Central"/>
</dbReference>
<dbReference type="CDD" id="cd07307">
    <property type="entry name" value="BAR"/>
    <property type="match status" value="1"/>
</dbReference>
<dbReference type="CDD" id="cd00159">
    <property type="entry name" value="RhoGAP"/>
    <property type="match status" value="1"/>
</dbReference>
<dbReference type="FunFam" id="1.10.555.10:FF:000161">
    <property type="match status" value="1"/>
</dbReference>
<dbReference type="FunFam" id="1.20.1270.60:FF:000236">
    <property type="entry name" value="Rho GTPase-activating protein gacP"/>
    <property type="match status" value="1"/>
</dbReference>
<dbReference type="Gene3D" id="1.20.1270.60">
    <property type="entry name" value="Arfaptin homology (AH) domain/BAR domain"/>
    <property type="match status" value="1"/>
</dbReference>
<dbReference type="Gene3D" id="1.10.555.10">
    <property type="entry name" value="Rho GTPase activation protein"/>
    <property type="match status" value="1"/>
</dbReference>
<dbReference type="InterPro" id="IPR027267">
    <property type="entry name" value="AH/BAR_dom_sf"/>
</dbReference>
<dbReference type="InterPro" id="IPR004148">
    <property type="entry name" value="BAR_dom"/>
</dbReference>
<dbReference type="InterPro" id="IPR050729">
    <property type="entry name" value="Rho-GAP"/>
</dbReference>
<dbReference type="InterPro" id="IPR008936">
    <property type="entry name" value="Rho_GTPase_activation_prot"/>
</dbReference>
<dbReference type="InterPro" id="IPR000198">
    <property type="entry name" value="RhoGAP_dom"/>
</dbReference>
<dbReference type="PANTHER" id="PTHR23176:SF99">
    <property type="entry name" value="RHO GTPASE-ACTIVATING PROTEIN GACP"/>
    <property type="match status" value="1"/>
</dbReference>
<dbReference type="PANTHER" id="PTHR23176">
    <property type="entry name" value="RHO/RAC/CDC GTPASE-ACTIVATING PROTEIN"/>
    <property type="match status" value="1"/>
</dbReference>
<dbReference type="Pfam" id="PF16746">
    <property type="entry name" value="BAR_3"/>
    <property type="match status" value="1"/>
</dbReference>
<dbReference type="Pfam" id="PF00620">
    <property type="entry name" value="RhoGAP"/>
    <property type="match status" value="1"/>
</dbReference>
<dbReference type="SMART" id="SM00324">
    <property type="entry name" value="RhoGAP"/>
    <property type="match status" value="1"/>
</dbReference>
<dbReference type="SUPFAM" id="SSF103657">
    <property type="entry name" value="BAR/IMD domain-like"/>
    <property type="match status" value="1"/>
</dbReference>
<dbReference type="SUPFAM" id="SSF48350">
    <property type="entry name" value="GTPase activation domain, GAP"/>
    <property type="match status" value="1"/>
</dbReference>
<dbReference type="PROSITE" id="PS50238">
    <property type="entry name" value="RHOGAP"/>
    <property type="match status" value="1"/>
</dbReference>
<reference key="1">
    <citation type="journal article" date="2005" name="Nature">
        <title>The genome of the social amoeba Dictyostelium discoideum.</title>
        <authorList>
            <person name="Eichinger L."/>
            <person name="Pachebat J.A."/>
            <person name="Gloeckner G."/>
            <person name="Rajandream M.A."/>
            <person name="Sucgang R."/>
            <person name="Berriman M."/>
            <person name="Song J."/>
            <person name="Olsen R."/>
            <person name="Szafranski K."/>
            <person name="Xu Q."/>
            <person name="Tunggal B."/>
            <person name="Kummerfeld S."/>
            <person name="Madera M."/>
            <person name="Konfortov B.A."/>
            <person name="Rivero F."/>
            <person name="Bankier A.T."/>
            <person name="Lehmann R."/>
            <person name="Hamlin N."/>
            <person name="Davies R."/>
            <person name="Gaudet P."/>
            <person name="Fey P."/>
            <person name="Pilcher K."/>
            <person name="Chen G."/>
            <person name="Saunders D."/>
            <person name="Sodergren E.J."/>
            <person name="Davis P."/>
            <person name="Kerhornou A."/>
            <person name="Nie X."/>
            <person name="Hall N."/>
            <person name="Anjard C."/>
            <person name="Hemphill L."/>
            <person name="Bason N."/>
            <person name="Farbrother P."/>
            <person name="Desany B."/>
            <person name="Just E."/>
            <person name="Morio T."/>
            <person name="Rost R."/>
            <person name="Churcher C.M."/>
            <person name="Cooper J."/>
            <person name="Haydock S."/>
            <person name="van Driessche N."/>
            <person name="Cronin A."/>
            <person name="Goodhead I."/>
            <person name="Muzny D.M."/>
            <person name="Mourier T."/>
            <person name="Pain A."/>
            <person name="Lu M."/>
            <person name="Harper D."/>
            <person name="Lindsay R."/>
            <person name="Hauser H."/>
            <person name="James K.D."/>
            <person name="Quiles M."/>
            <person name="Madan Babu M."/>
            <person name="Saito T."/>
            <person name="Buchrieser C."/>
            <person name="Wardroper A."/>
            <person name="Felder M."/>
            <person name="Thangavelu M."/>
            <person name="Johnson D."/>
            <person name="Knights A."/>
            <person name="Loulseged H."/>
            <person name="Mungall K.L."/>
            <person name="Oliver K."/>
            <person name="Price C."/>
            <person name="Quail M.A."/>
            <person name="Urushihara H."/>
            <person name="Hernandez J."/>
            <person name="Rabbinowitsch E."/>
            <person name="Steffen D."/>
            <person name="Sanders M."/>
            <person name="Ma J."/>
            <person name="Kohara Y."/>
            <person name="Sharp S."/>
            <person name="Simmonds M.N."/>
            <person name="Spiegler S."/>
            <person name="Tivey A."/>
            <person name="Sugano S."/>
            <person name="White B."/>
            <person name="Walker D."/>
            <person name="Woodward J.R."/>
            <person name="Winckler T."/>
            <person name="Tanaka Y."/>
            <person name="Shaulsky G."/>
            <person name="Schleicher M."/>
            <person name="Weinstock G.M."/>
            <person name="Rosenthal A."/>
            <person name="Cox E.C."/>
            <person name="Chisholm R.L."/>
            <person name="Gibbs R.A."/>
            <person name="Loomis W.F."/>
            <person name="Platzer M."/>
            <person name="Kay R.R."/>
            <person name="Williams J.G."/>
            <person name="Dear P.H."/>
            <person name="Noegel A.A."/>
            <person name="Barrell B.G."/>
            <person name="Kuspa A."/>
        </authorList>
    </citation>
    <scope>NUCLEOTIDE SEQUENCE [LARGE SCALE GENOMIC DNA]</scope>
    <source>
        <strain>AX4</strain>
    </source>
</reference>
<accession>Q54XE8</accession>
<protein>
    <recommendedName>
        <fullName>Rho GTPase-activating protein gacP</fullName>
    </recommendedName>
    <alternativeName>
        <fullName>GTPase activating factor for raC protein P</fullName>
    </alternativeName>
</protein>
<feature type="chain" id="PRO_0000380214" description="Rho GTPase-activating protein gacP">
    <location>
        <begin position="1"/>
        <end position="576"/>
    </location>
</feature>
<feature type="domain" description="Rho-GAP" evidence="3">
    <location>
        <begin position="277"/>
        <end position="462"/>
    </location>
</feature>
<feature type="region of interest" description="Disordered" evidence="4">
    <location>
        <begin position="472"/>
        <end position="576"/>
    </location>
</feature>
<feature type="coiled-coil region" evidence="2">
    <location>
        <begin position="123"/>
        <end position="189"/>
    </location>
</feature>
<feature type="compositionally biased region" description="Low complexity" evidence="4">
    <location>
        <begin position="482"/>
        <end position="500"/>
    </location>
</feature>
<feature type="compositionally biased region" description="Polar residues" evidence="4">
    <location>
        <begin position="501"/>
        <end position="513"/>
    </location>
</feature>
<feature type="compositionally biased region" description="Low complexity" evidence="4">
    <location>
        <begin position="514"/>
        <end position="530"/>
    </location>
</feature>
<feature type="compositionally biased region" description="Acidic residues" evidence="4">
    <location>
        <begin position="565"/>
        <end position="576"/>
    </location>
</feature>
<feature type="site" description="Arginine finger; crucial for GTP hydrolysis by stabilizing the transition state" evidence="3">
    <location>
        <position position="313"/>
    </location>
</feature>
<name>GACP_DICDI</name>
<sequence length="576" mass="65649">MKNFKAKIITAKQNVMEKTAKRENTLEPDEMKELEKKTTETKDFLRKLTKSVEKETLSSGVSIQDGTELADNFLDYSVHVRDNQSDLVILSGILSKIGEFQAGFEDLKSKLNSSLINDVSDPLKSIIKTELKQAKESKREYDRVRVAFDAHLSELANLRKQKNVKPPKIQESEEECERLRTNFERVGIDTTCLLRDTNVITEFETVEKLCDYLDSYHTFFQKGYRWLAQMIPDIYEYRLYVEKRKAELEKSKVRISMMVSPQKQQADSLSKTKCFGEDLSVLLNREGSTLPWFIVRAFQAIRNHIATEEGLFRLSGTKRIIYEYKQKIDEGKEYNLSEILDIHVVCNLVKLYLRELQPEPLLTYSRYNELIDTCNIEDQNQRVDKISKILSSLPKHYYTLLHHLIHLLSQIASQPKSKMGPANLATVIGPNILICQTDVVLEDIALGNMVVTTIIQNFDRIFGGPPLLQQSVPDTYVPPPNNTRNNSVNNFNNVQPSSFSASTSRSINLNKSTNNPNINDDNNNNNNINNSDDEPYDPNAPPIYSGVPMRGNIKHSDSCSTLGDSFDEGDAVELSD</sequence>
<proteinExistence type="inferred from homology"/>
<keyword id="KW-0175">Coiled coil</keyword>
<keyword id="KW-0963">Cytoplasm</keyword>
<keyword id="KW-0343">GTPase activation</keyword>
<keyword id="KW-1185">Reference proteome</keyword>